<keyword id="KW-0068">Autocatalytic cleavage</keyword>
<keyword id="KW-0210">Decarboxylase</keyword>
<keyword id="KW-0456">Lyase</keyword>
<keyword id="KW-0620">Polyamine biosynthesis</keyword>
<keyword id="KW-0670">Pyruvate</keyword>
<keyword id="KW-0949">S-adenosyl-L-methionine</keyword>
<keyword id="KW-0704">Schiff base</keyword>
<keyword id="KW-0745">Spermidine biosynthesis</keyword>
<keyword id="KW-0865">Zymogen</keyword>
<reference key="1">
    <citation type="journal article" date="2011" name="J. Bacteriol.">
        <title>Genome sequence of Thermotoga sp. strain RQ2, a hyperthermophilic bacterium isolated from a geothermally heated region of the seafloor near Ribeira Quente, the Azores.</title>
        <authorList>
            <person name="Swithers K.S."/>
            <person name="DiPippo J.L."/>
            <person name="Bruce D.C."/>
            <person name="Detter C."/>
            <person name="Tapia R."/>
            <person name="Han S."/>
            <person name="Saunders E."/>
            <person name="Goodwin L.A."/>
            <person name="Han J."/>
            <person name="Woyke T."/>
            <person name="Pitluck S."/>
            <person name="Pennacchio L."/>
            <person name="Nolan M."/>
            <person name="Mikhailova N."/>
            <person name="Lykidis A."/>
            <person name="Land M.L."/>
            <person name="Brettin T."/>
            <person name="Stetter K.O."/>
            <person name="Nelson K.E."/>
            <person name="Gogarten J.P."/>
            <person name="Noll K.M."/>
        </authorList>
    </citation>
    <scope>NUCLEOTIDE SEQUENCE [LARGE SCALE GENOMIC DNA]</scope>
    <source>
        <strain>RQ2</strain>
    </source>
</reference>
<proteinExistence type="inferred from homology"/>
<comment type="function">
    <text evidence="1">Catalyzes the decarboxylation of S-adenosylmethionine to S-adenosylmethioninamine (dcAdoMet), the propylamine donor required for the synthesis of the polyamines spermine and spermidine from the diamine putrescine.</text>
</comment>
<comment type="catalytic activity">
    <reaction evidence="1">
        <text>S-adenosyl-L-methionine + H(+) = S-adenosyl 3-(methylsulfanyl)propylamine + CO2</text>
        <dbReference type="Rhea" id="RHEA:15981"/>
        <dbReference type="ChEBI" id="CHEBI:15378"/>
        <dbReference type="ChEBI" id="CHEBI:16526"/>
        <dbReference type="ChEBI" id="CHEBI:57443"/>
        <dbReference type="ChEBI" id="CHEBI:59789"/>
        <dbReference type="EC" id="4.1.1.50"/>
    </reaction>
</comment>
<comment type="cofactor">
    <cofactor evidence="1">
        <name>pyruvate</name>
        <dbReference type="ChEBI" id="CHEBI:15361"/>
    </cofactor>
    <text evidence="1">Binds 1 pyruvoyl group covalently per subunit.</text>
</comment>
<comment type="pathway">
    <text evidence="1">Amine and polyamine biosynthesis; S-adenosylmethioninamine biosynthesis; S-adenosylmethioninamine from S-adenosyl-L-methionine: step 1/1.</text>
</comment>
<comment type="subunit">
    <text evidence="1">Heterotetramer of two alpha and two beta chains arranged as a dimer of alpha/beta heterodimers.</text>
</comment>
<comment type="PTM">
    <text evidence="1">Is synthesized initially as an inactive proenzyme. Formation of the active enzyme involves a self-maturation process in which the active site pyruvoyl group is generated from an internal serine residue via an autocatalytic post-translational modification. Two non-identical subunits are generated from the proenzyme in this reaction, and the pyruvate is formed at the N-terminus of the alpha chain, which is derived from the carboxyl end of the proenzyme. The post-translation cleavage follows an unusual pathway, termed non-hydrolytic serinolysis, in which the side chain hydroxyl group of the serine supplies its oxygen atom to form the C-terminus of the beta chain, while the remainder of the serine residue undergoes an oxidative deamination to produce ammonia and the pyruvoyl group blocking the N-terminus of the alpha chain.</text>
</comment>
<comment type="similarity">
    <text evidence="1">Belongs to the prokaryotic AdoMetDC family. Type 1 subfamily.</text>
</comment>
<protein>
    <recommendedName>
        <fullName evidence="1">S-adenosylmethionine decarboxylase proenzyme</fullName>
        <shortName evidence="1">AdoMetDC</shortName>
        <shortName evidence="1">SAMDC</shortName>
        <ecNumber evidence="1">4.1.1.50</ecNumber>
    </recommendedName>
    <component>
        <recommendedName>
            <fullName evidence="1">S-adenosylmethionine decarboxylase beta chain</fullName>
        </recommendedName>
    </component>
    <component>
        <recommendedName>
            <fullName evidence="1">S-adenosylmethionine decarboxylase alpha chain</fullName>
        </recommendedName>
    </component>
</protein>
<sequence>MKSLGRHLVAEFYECDKEVLDNVQLIEQEMKQAAYESGATIVTSTFHRFLPYGVSGVVVISESHLTIHTWPEYGYAAIDLFTCGEDVDPWKAFEHLKKALKAKRVHVVEHERGRYDEIGIPEDSPHKVTV</sequence>
<name>SPEH_THESQ</name>
<feature type="chain" id="PRO_1000125473" description="S-adenosylmethionine decarboxylase beta chain" evidence="1">
    <location>
        <begin position="1"/>
        <end position="62"/>
    </location>
</feature>
<feature type="chain" id="PRO_1000125474" description="S-adenosylmethionine decarboxylase alpha chain" evidence="1">
    <location>
        <begin position="63"/>
        <end position="130"/>
    </location>
</feature>
<feature type="active site" description="Schiff-base intermediate with substrate; via pyruvic acid" evidence="1">
    <location>
        <position position="63"/>
    </location>
</feature>
<feature type="active site" description="Proton acceptor; for processing activity" evidence="1">
    <location>
        <position position="68"/>
    </location>
</feature>
<feature type="active site" description="Proton donor; for catalytic activity" evidence="1">
    <location>
        <position position="83"/>
    </location>
</feature>
<feature type="site" description="Cleavage (non-hydrolytic); by autolysis" evidence="1">
    <location>
        <begin position="62"/>
        <end position="63"/>
    </location>
</feature>
<feature type="modified residue" description="Pyruvic acid (Ser); by autocatalysis" evidence="1">
    <location>
        <position position="63"/>
    </location>
</feature>
<dbReference type="EC" id="4.1.1.50" evidence="1"/>
<dbReference type="EMBL" id="CP000969">
    <property type="protein sequence ID" value="ACB08633.1"/>
    <property type="molecule type" value="Genomic_DNA"/>
</dbReference>
<dbReference type="SMR" id="B1L8F1"/>
<dbReference type="KEGG" id="trq:TRQ2_0274"/>
<dbReference type="HOGENOM" id="CLU_125470_2_3_0"/>
<dbReference type="UniPathway" id="UPA00331">
    <property type="reaction ID" value="UER00451"/>
</dbReference>
<dbReference type="Proteomes" id="UP000001687">
    <property type="component" value="Chromosome"/>
</dbReference>
<dbReference type="GO" id="GO:0005829">
    <property type="term" value="C:cytosol"/>
    <property type="evidence" value="ECO:0007669"/>
    <property type="project" value="TreeGrafter"/>
</dbReference>
<dbReference type="GO" id="GO:0004014">
    <property type="term" value="F:adenosylmethionine decarboxylase activity"/>
    <property type="evidence" value="ECO:0007669"/>
    <property type="project" value="UniProtKB-UniRule"/>
</dbReference>
<dbReference type="GO" id="GO:0008295">
    <property type="term" value="P:spermidine biosynthetic process"/>
    <property type="evidence" value="ECO:0007669"/>
    <property type="project" value="UniProtKB-UniRule"/>
</dbReference>
<dbReference type="FunFam" id="3.30.160.750:FF:000004">
    <property type="entry name" value="S-adenosylmethionine decarboxylase proenzyme"/>
    <property type="match status" value="1"/>
</dbReference>
<dbReference type="FunFam" id="3.30.360.110:FF:000001">
    <property type="entry name" value="S-adenosylmethionine decarboxylase proenzyme"/>
    <property type="match status" value="1"/>
</dbReference>
<dbReference type="Gene3D" id="3.30.160.750">
    <property type="match status" value="1"/>
</dbReference>
<dbReference type="Gene3D" id="3.30.360.110">
    <property type="entry name" value="S-adenosylmethionine decarboxylase domain"/>
    <property type="match status" value="1"/>
</dbReference>
<dbReference type="HAMAP" id="MF_00464">
    <property type="entry name" value="AdoMetDC_1"/>
    <property type="match status" value="1"/>
</dbReference>
<dbReference type="InterPro" id="IPR042286">
    <property type="entry name" value="AdoMetDC_C"/>
</dbReference>
<dbReference type="InterPro" id="IPR003826">
    <property type="entry name" value="AdoMetDC_fam_prok"/>
</dbReference>
<dbReference type="InterPro" id="IPR042284">
    <property type="entry name" value="AdoMetDC_N"/>
</dbReference>
<dbReference type="InterPro" id="IPR016067">
    <property type="entry name" value="S-AdoMet_deCO2ase_core"/>
</dbReference>
<dbReference type="InterPro" id="IPR017716">
    <property type="entry name" value="S-AdoMet_deCOase_pro-enz"/>
</dbReference>
<dbReference type="NCBIfam" id="TIGR03330">
    <property type="entry name" value="SAM_DCase_Bsu"/>
    <property type="match status" value="1"/>
</dbReference>
<dbReference type="PANTHER" id="PTHR33866">
    <property type="entry name" value="S-ADENOSYLMETHIONINE DECARBOXYLASE PROENZYME"/>
    <property type="match status" value="1"/>
</dbReference>
<dbReference type="PANTHER" id="PTHR33866:SF2">
    <property type="entry name" value="S-ADENOSYLMETHIONINE DECARBOXYLASE PROENZYME"/>
    <property type="match status" value="1"/>
</dbReference>
<dbReference type="Pfam" id="PF02675">
    <property type="entry name" value="AdoMet_dc"/>
    <property type="match status" value="1"/>
</dbReference>
<dbReference type="SUPFAM" id="SSF56276">
    <property type="entry name" value="S-adenosylmethionine decarboxylase"/>
    <property type="match status" value="1"/>
</dbReference>
<gene>
    <name evidence="1" type="primary">speH</name>
    <name type="ordered locus">TRQ2_0274</name>
</gene>
<organism>
    <name type="scientific">Thermotoga sp. (strain RQ2)</name>
    <dbReference type="NCBI Taxonomy" id="126740"/>
    <lineage>
        <taxon>Bacteria</taxon>
        <taxon>Thermotogati</taxon>
        <taxon>Thermotogota</taxon>
        <taxon>Thermotogae</taxon>
        <taxon>Thermotogales</taxon>
        <taxon>Thermotogaceae</taxon>
        <taxon>Thermotoga</taxon>
    </lineage>
</organism>
<evidence type="ECO:0000255" key="1">
    <source>
        <dbReference type="HAMAP-Rule" id="MF_00464"/>
    </source>
</evidence>
<accession>B1L8F1</accession>